<comment type="function">
    <text evidence="1">Bidirectionally degrades single-stranded DNA into large acid-insoluble oligonucleotides, which are then degraded further into small acid-soluble oligonucleotides.</text>
</comment>
<comment type="catalytic activity">
    <reaction evidence="1">
        <text>Exonucleolytic cleavage in either 5'- to 3'- or 3'- to 5'-direction to yield nucleoside 5'-phosphates.</text>
        <dbReference type="EC" id="3.1.11.6"/>
    </reaction>
</comment>
<comment type="subunit">
    <text evidence="1">Heterooligomer composed of large and small subunits.</text>
</comment>
<comment type="subcellular location">
    <subcellularLocation>
        <location evidence="1">Cytoplasm</location>
    </subcellularLocation>
</comment>
<comment type="similarity">
    <text evidence="1">Belongs to the XseB family.</text>
</comment>
<dbReference type="EC" id="3.1.11.6" evidence="1"/>
<dbReference type="EMBL" id="CP001144">
    <property type="protein sequence ID" value="ACH73683.1"/>
    <property type="molecule type" value="Genomic_DNA"/>
</dbReference>
<dbReference type="RefSeq" id="WP_001124944.1">
    <property type="nucleotide sequence ID" value="NC_011205.1"/>
</dbReference>
<dbReference type="SMR" id="B5FKS9"/>
<dbReference type="KEGG" id="sed:SeD_A0465"/>
<dbReference type="HOGENOM" id="CLU_145918_3_3_6"/>
<dbReference type="Proteomes" id="UP000008322">
    <property type="component" value="Chromosome"/>
</dbReference>
<dbReference type="GO" id="GO:0005829">
    <property type="term" value="C:cytosol"/>
    <property type="evidence" value="ECO:0007669"/>
    <property type="project" value="TreeGrafter"/>
</dbReference>
<dbReference type="GO" id="GO:0009318">
    <property type="term" value="C:exodeoxyribonuclease VII complex"/>
    <property type="evidence" value="ECO:0007669"/>
    <property type="project" value="InterPro"/>
</dbReference>
<dbReference type="GO" id="GO:0008855">
    <property type="term" value="F:exodeoxyribonuclease VII activity"/>
    <property type="evidence" value="ECO:0007669"/>
    <property type="project" value="UniProtKB-UniRule"/>
</dbReference>
<dbReference type="GO" id="GO:0006308">
    <property type="term" value="P:DNA catabolic process"/>
    <property type="evidence" value="ECO:0007669"/>
    <property type="project" value="UniProtKB-UniRule"/>
</dbReference>
<dbReference type="FunFam" id="1.10.287.1040:FF:000001">
    <property type="entry name" value="Exodeoxyribonuclease 7 small subunit"/>
    <property type="match status" value="1"/>
</dbReference>
<dbReference type="Gene3D" id="1.10.287.1040">
    <property type="entry name" value="Exonuclease VII, small subunit"/>
    <property type="match status" value="1"/>
</dbReference>
<dbReference type="HAMAP" id="MF_00337">
    <property type="entry name" value="Exonuc_7_S"/>
    <property type="match status" value="1"/>
</dbReference>
<dbReference type="InterPro" id="IPR003761">
    <property type="entry name" value="Exonuc_VII_S"/>
</dbReference>
<dbReference type="InterPro" id="IPR037004">
    <property type="entry name" value="Exonuc_VII_ssu_sf"/>
</dbReference>
<dbReference type="NCBIfam" id="NF002137">
    <property type="entry name" value="PRK00977.1-1"/>
    <property type="match status" value="1"/>
</dbReference>
<dbReference type="NCBIfam" id="NF002140">
    <property type="entry name" value="PRK00977.1-4"/>
    <property type="match status" value="1"/>
</dbReference>
<dbReference type="NCBIfam" id="TIGR01280">
    <property type="entry name" value="xseB"/>
    <property type="match status" value="1"/>
</dbReference>
<dbReference type="PANTHER" id="PTHR34137">
    <property type="entry name" value="EXODEOXYRIBONUCLEASE 7 SMALL SUBUNIT"/>
    <property type="match status" value="1"/>
</dbReference>
<dbReference type="PANTHER" id="PTHR34137:SF1">
    <property type="entry name" value="EXODEOXYRIBONUCLEASE 7 SMALL SUBUNIT"/>
    <property type="match status" value="1"/>
</dbReference>
<dbReference type="Pfam" id="PF02609">
    <property type="entry name" value="Exonuc_VII_S"/>
    <property type="match status" value="1"/>
</dbReference>
<dbReference type="PIRSF" id="PIRSF006488">
    <property type="entry name" value="Exonuc_VII_S"/>
    <property type="match status" value="1"/>
</dbReference>
<dbReference type="SUPFAM" id="SSF116842">
    <property type="entry name" value="XseB-like"/>
    <property type="match status" value="1"/>
</dbReference>
<proteinExistence type="inferred from homology"/>
<accession>B5FKS9</accession>
<reference key="1">
    <citation type="journal article" date="2011" name="J. Bacteriol.">
        <title>Comparative genomics of 28 Salmonella enterica isolates: evidence for CRISPR-mediated adaptive sublineage evolution.</title>
        <authorList>
            <person name="Fricke W.F."/>
            <person name="Mammel M.K."/>
            <person name="McDermott P.F."/>
            <person name="Tartera C."/>
            <person name="White D.G."/>
            <person name="Leclerc J.E."/>
            <person name="Ravel J."/>
            <person name="Cebula T.A."/>
        </authorList>
    </citation>
    <scope>NUCLEOTIDE SEQUENCE [LARGE SCALE GENOMIC DNA]</scope>
    <source>
        <strain>CT_02021853</strain>
    </source>
</reference>
<feature type="chain" id="PRO_1000119950" description="Exodeoxyribonuclease 7 small subunit">
    <location>
        <begin position="1"/>
        <end position="80"/>
    </location>
</feature>
<keyword id="KW-0963">Cytoplasm</keyword>
<keyword id="KW-0269">Exonuclease</keyword>
<keyword id="KW-0378">Hydrolase</keyword>
<keyword id="KW-0540">Nuclease</keyword>
<name>EX7S_SALDC</name>
<sequence length="80" mass="8932">MPKKNEAPASFETALSELEHIVTRLESGDLPLEDALNEFERGVQLARQGQAKLQQAEQRVQILLSDNEEASPEPFIADNE</sequence>
<protein>
    <recommendedName>
        <fullName evidence="1">Exodeoxyribonuclease 7 small subunit</fullName>
        <ecNumber evidence="1">3.1.11.6</ecNumber>
    </recommendedName>
    <alternativeName>
        <fullName evidence="1">Exodeoxyribonuclease VII small subunit</fullName>
        <shortName evidence="1">Exonuclease VII small subunit</shortName>
    </alternativeName>
</protein>
<gene>
    <name evidence="1" type="primary">xseB</name>
    <name type="ordered locus">SeD_A0465</name>
</gene>
<evidence type="ECO:0000255" key="1">
    <source>
        <dbReference type="HAMAP-Rule" id="MF_00337"/>
    </source>
</evidence>
<organism>
    <name type="scientific">Salmonella dublin (strain CT_02021853)</name>
    <dbReference type="NCBI Taxonomy" id="439851"/>
    <lineage>
        <taxon>Bacteria</taxon>
        <taxon>Pseudomonadati</taxon>
        <taxon>Pseudomonadota</taxon>
        <taxon>Gammaproteobacteria</taxon>
        <taxon>Enterobacterales</taxon>
        <taxon>Enterobacteriaceae</taxon>
        <taxon>Salmonella</taxon>
    </lineage>
</organism>